<evidence type="ECO:0000255" key="1">
    <source>
        <dbReference type="HAMAP-Rule" id="MF_00815"/>
    </source>
</evidence>
<feature type="chain" id="PRO_1000134207" description="ATP synthase gamma chain">
    <location>
        <begin position="1"/>
        <end position="286"/>
    </location>
</feature>
<keyword id="KW-0066">ATP synthesis</keyword>
<keyword id="KW-0997">Cell inner membrane</keyword>
<keyword id="KW-1003">Cell membrane</keyword>
<keyword id="KW-0139">CF(1)</keyword>
<keyword id="KW-0375">Hydrogen ion transport</keyword>
<keyword id="KW-0406">Ion transport</keyword>
<keyword id="KW-0472">Membrane</keyword>
<keyword id="KW-1185">Reference proteome</keyword>
<keyword id="KW-0813">Transport</keyword>
<accession>B1KQ35</accession>
<dbReference type="EMBL" id="CP000961">
    <property type="protein sequence ID" value="ACA89148.1"/>
    <property type="molecule type" value="Genomic_DNA"/>
</dbReference>
<dbReference type="RefSeq" id="WP_012327465.1">
    <property type="nucleotide sequence ID" value="NC_010506.1"/>
</dbReference>
<dbReference type="SMR" id="B1KQ35"/>
<dbReference type="STRING" id="392500.Swoo_4899"/>
<dbReference type="KEGG" id="swd:Swoo_4899"/>
<dbReference type="eggNOG" id="COG0224">
    <property type="taxonomic scope" value="Bacteria"/>
</dbReference>
<dbReference type="HOGENOM" id="CLU_050669_0_1_6"/>
<dbReference type="Proteomes" id="UP000002168">
    <property type="component" value="Chromosome"/>
</dbReference>
<dbReference type="GO" id="GO:0005886">
    <property type="term" value="C:plasma membrane"/>
    <property type="evidence" value="ECO:0007669"/>
    <property type="project" value="UniProtKB-SubCell"/>
</dbReference>
<dbReference type="GO" id="GO:0045259">
    <property type="term" value="C:proton-transporting ATP synthase complex"/>
    <property type="evidence" value="ECO:0007669"/>
    <property type="project" value="UniProtKB-KW"/>
</dbReference>
<dbReference type="GO" id="GO:0005524">
    <property type="term" value="F:ATP binding"/>
    <property type="evidence" value="ECO:0007669"/>
    <property type="project" value="UniProtKB-UniRule"/>
</dbReference>
<dbReference type="GO" id="GO:0046933">
    <property type="term" value="F:proton-transporting ATP synthase activity, rotational mechanism"/>
    <property type="evidence" value="ECO:0007669"/>
    <property type="project" value="UniProtKB-UniRule"/>
</dbReference>
<dbReference type="GO" id="GO:0042777">
    <property type="term" value="P:proton motive force-driven plasma membrane ATP synthesis"/>
    <property type="evidence" value="ECO:0007669"/>
    <property type="project" value="UniProtKB-UniRule"/>
</dbReference>
<dbReference type="CDD" id="cd12151">
    <property type="entry name" value="F1-ATPase_gamma"/>
    <property type="match status" value="1"/>
</dbReference>
<dbReference type="FunFam" id="1.10.287.80:FF:000005">
    <property type="entry name" value="ATP synthase gamma chain"/>
    <property type="match status" value="2"/>
</dbReference>
<dbReference type="FunFam" id="3.40.1380.10:FF:000001">
    <property type="entry name" value="ATP synthase gamma chain"/>
    <property type="match status" value="1"/>
</dbReference>
<dbReference type="Gene3D" id="3.40.1380.10">
    <property type="match status" value="1"/>
</dbReference>
<dbReference type="Gene3D" id="1.10.287.80">
    <property type="entry name" value="ATP synthase, gamma subunit, helix hairpin domain"/>
    <property type="match status" value="1"/>
</dbReference>
<dbReference type="HAMAP" id="MF_00815">
    <property type="entry name" value="ATP_synth_gamma_bact"/>
    <property type="match status" value="1"/>
</dbReference>
<dbReference type="InterPro" id="IPR035968">
    <property type="entry name" value="ATP_synth_F1_ATPase_gsu"/>
</dbReference>
<dbReference type="InterPro" id="IPR000131">
    <property type="entry name" value="ATP_synth_F1_gsu"/>
</dbReference>
<dbReference type="InterPro" id="IPR023632">
    <property type="entry name" value="ATP_synth_F1_gsu_CS"/>
</dbReference>
<dbReference type="NCBIfam" id="TIGR01146">
    <property type="entry name" value="ATPsyn_F1gamma"/>
    <property type="match status" value="1"/>
</dbReference>
<dbReference type="NCBIfam" id="NF004144">
    <property type="entry name" value="PRK05621.1-1"/>
    <property type="match status" value="1"/>
</dbReference>
<dbReference type="PANTHER" id="PTHR11693">
    <property type="entry name" value="ATP SYNTHASE GAMMA CHAIN"/>
    <property type="match status" value="1"/>
</dbReference>
<dbReference type="PANTHER" id="PTHR11693:SF22">
    <property type="entry name" value="ATP SYNTHASE SUBUNIT GAMMA, MITOCHONDRIAL"/>
    <property type="match status" value="1"/>
</dbReference>
<dbReference type="Pfam" id="PF00231">
    <property type="entry name" value="ATP-synt"/>
    <property type="match status" value="1"/>
</dbReference>
<dbReference type="PRINTS" id="PR00126">
    <property type="entry name" value="ATPASEGAMMA"/>
</dbReference>
<dbReference type="SUPFAM" id="SSF52943">
    <property type="entry name" value="ATP synthase (F1-ATPase), gamma subunit"/>
    <property type="match status" value="1"/>
</dbReference>
<dbReference type="PROSITE" id="PS00153">
    <property type="entry name" value="ATPASE_GAMMA"/>
    <property type="match status" value="1"/>
</dbReference>
<name>ATPG_SHEWM</name>
<comment type="function">
    <text evidence="1">Produces ATP from ADP in the presence of a proton gradient across the membrane. The gamma chain is believed to be important in regulating ATPase activity and the flow of protons through the CF(0) complex.</text>
</comment>
<comment type="subunit">
    <text evidence="1">F-type ATPases have 2 components, CF(1) - the catalytic core - and CF(0) - the membrane proton channel. CF(1) has five subunits: alpha(3), beta(3), gamma(1), delta(1), epsilon(1). CF(0) has three main subunits: a, b and c.</text>
</comment>
<comment type="subcellular location">
    <subcellularLocation>
        <location evidence="1">Cell inner membrane</location>
        <topology evidence="1">Peripheral membrane protein</topology>
    </subcellularLocation>
</comment>
<comment type="similarity">
    <text evidence="1">Belongs to the ATPase gamma chain family.</text>
</comment>
<organism>
    <name type="scientific">Shewanella woodyi (strain ATCC 51908 / MS32)</name>
    <dbReference type="NCBI Taxonomy" id="392500"/>
    <lineage>
        <taxon>Bacteria</taxon>
        <taxon>Pseudomonadati</taxon>
        <taxon>Pseudomonadota</taxon>
        <taxon>Gammaproteobacteria</taxon>
        <taxon>Alteromonadales</taxon>
        <taxon>Shewanellaceae</taxon>
        <taxon>Shewanella</taxon>
    </lineage>
</organism>
<proteinExistence type="inferred from homology"/>
<gene>
    <name evidence="1" type="primary">atpG</name>
    <name type="ordered locus">Swoo_4899</name>
</gene>
<protein>
    <recommendedName>
        <fullName evidence="1">ATP synthase gamma chain</fullName>
    </recommendedName>
    <alternativeName>
        <fullName evidence="1">ATP synthase F1 sector gamma subunit</fullName>
    </alternativeName>
    <alternativeName>
        <fullName evidence="1">F-ATPase gamma subunit</fullName>
    </alternativeName>
</protein>
<sequence>MANAKEIKTKIASVQNTQKITSAMEMVAASKMRKAQDRMASSRPYAENMRKVIGHVAQGSLEYKHPYLEVREAKRVGYIVVSTDRGLCGGLNVNLFKKVVADVKKQREAGAEVEFCPIGARSVQFFNSFGGQVSAHASGLGDAPKLADLIGTVRVMLQAYNEGKLDRLYVVFNKFVNTMSQTPVIEQLLPLPKSEEDEISHHWDYLYEPDPKELLDTLLVRYVESQVYQGVVENIASEQAARMVAMKAATDNAGELISDLELVYNKARQAAITQELSEIVSGAAAV</sequence>
<reference key="1">
    <citation type="submission" date="2008-02" db="EMBL/GenBank/DDBJ databases">
        <title>Complete sequence of Shewanella woodyi ATCC 51908.</title>
        <authorList>
            <consortium name="US DOE Joint Genome Institute"/>
            <person name="Copeland A."/>
            <person name="Lucas S."/>
            <person name="Lapidus A."/>
            <person name="Glavina del Rio T."/>
            <person name="Dalin E."/>
            <person name="Tice H."/>
            <person name="Bruce D."/>
            <person name="Goodwin L."/>
            <person name="Pitluck S."/>
            <person name="Sims D."/>
            <person name="Brettin T."/>
            <person name="Detter J.C."/>
            <person name="Han C."/>
            <person name="Kuske C.R."/>
            <person name="Schmutz J."/>
            <person name="Larimer F."/>
            <person name="Land M."/>
            <person name="Hauser L."/>
            <person name="Kyrpides N."/>
            <person name="Lykidis A."/>
            <person name="Zhao J.-S."/>
            <person name="Richardson P."/>
        </authorList>
    </citation>
    <scope>NUCLEOTIDE SEQUENCE [LARGE SCALE GENOMIC DNA]</scope>
    <source>
        <strain>ATCC 51908 / MS32</strain>
    </source>
</reference>